<name>NOS2_MOUSE</name>
<gene>
    <name type="primary">Nos2</name>
    <name type="synonym">Inosl</name>
</gene>
<comment type="function">
    <text evidence="3 4 15 21">Produces nitric oxide (NO) which is a messenger molecule with diverse functions throughout the body (PubMed:7503239). In macrophages, NO mediates tumoricidal and bactericidal actions. Also has nitrosylase activity and mediates cysteine S-nitrosylation of cytoplasmic target proteins such PTGS2/COX2 (PubMed:16373578). As component of the iNOS-S100A8/9 transnitrosylase complex involved in the selective inflammatory stimulus-dependent S-nitrosylation of GAPDH implicated in regulation of the GAIT complex activity and probably multiple targets including ANXA5, EZR, MSN and VIM (By similarity). Involved in inflammation, enhances the synthesis of pro-inflammatory mediators such as IL6 and IL8 (By similarity).</text>
</comment>
<comment type="catalytic activity">
    <reaction evidence="3">
        <text>2 L-arginine + 3 NADPH + 4 O2 + H(+) = 2 L-citrulline + 2 nitric oxide + 3 NADP(+) + 4 H2O</text>
        <dbReference type="Rhea" id="RHEA:19897"/>
        <dbReference type="ChEBI" id="CHEBI:15377"/>
        <dbReference type="ChEBI" id="CHEBI:15378"/>
        <dbReference type="ChEBI" id="CHEBI:15379"/>
        <dbReference type="ChEBI" id="CHEBI:16480"/>
        <dbReference type="ChEBI" id="CHEBI:32682"/>
        <dbReference type="ChEBI" id="CHEBI:57743"/>
        <dbReference type="ChEBI" id="CHEBI:57783"/>
        <dbReference type="ChEBI" id="CHEBI:58349"/>
        <dbReference type="EC" id="1.14.13.39"/>
    </reaction>
    <physiologicalReaction direction="left-to-right" evidence="3">
        <dbReference type="Rhea" id="RHEA:19898"/>
    </physiologicalReaction>
</comment>
<comment type="cofactor">
    <cofactor evidence="10 11 13 14 23">
        <name>heme b</name>
        <dbReference type="ChEBI" id="CHEBI:60344"/>
    </cofactor>
</comment>
<comment type="cofactor">
    <cofactor evidence="2">
        <name>FAD</name>
        <dbReference type="ChEBI" id="CHEBI:57692"/>
    </cofactor>
    <text evidence="2">Binds 1 FAD.</text>
</comment>
<comment type="cofactor">
    <cofactor evidence="3">
        <name>FMN</name>
        <dbReference type="ChEBI" id="CHEBI:58210"/>
    </cofactor>
    <text evidence="3">Binds 1 FMN.</text>
</comment>
<comment type="cofactor">
    <cofactor evidence="10 11 12 13 14 23">
        <name>(6R)-L-erythro-5,6,7,8-tetrahydrobiopterin</name>
        <dbReference type="ChEBI" id="CHEBI:59560"/>
    </cofactor>
    <text evidence="10 11 12 13 14 23">Tetrahydrobiopterin (BH4). May stabilize the dimeric form of the enzyme.</text>
</comment>
<comment type="activity regulation">
    <text>Not stimulated by calcium/calmodulin. Aspirin inhibits expression and function of this enzyme and effects may be exerted at the level of translational/post-translational modification and directly on the catalytic activity.</text>
</comment>
<comment type="subunit">
    <text evidence="3 11 12 16 19">Homodimer (PubMed:10769116, PubMed:11669619). Interacts with NHERF1 (By similarity). Interacts with GAPDH (By similarity). Interacts with S100A8 and S100A9 to form the iNOS-S100A8/9 transnitrosylase complex (By similarity). Interacts with SPSB1, SPSB2 and SPSB4 (PubMed:20603330). Interacts with ELOC and CUL5 in the presence of SPSB1 or SPSB2 or SPSB4 (By similarity). Forms a complex with ASL, ASS1 and HSP90AA1; the complex regulates cell-autonomous L-arginine synthesis and citrulline recycling while channeling extracellular L-arginine to nitric oxide synthesis pathway.</text>
</comment>
<comment type="interaction">
    <interactant intactId="EBI-298897">
        <id>P29477</id>
    </interactant>
    <interactant intactId="EBI-644400">
        <id>Q04207</id>
        <label>Rela</label>
    </interactant>
    <organismsDiffer>false</organismsDiffer>
    <experiments>3</experiments>
</comment>
<comment type="subcellular location">
    <subcellularLocation>
        <location evidence="3">Cytoplasm</location>
        <location evidence="3">Cytosol</location>
    </subcellularLocation>
    <text evidence="3">Localizes as discrete foci scattered throughout the cytosol and in the presence of SPSB1 and SPSB4, exhibits a more diffuse cytosolic localization.</text>
</comment>
<comment type="tissue specificity">
    <text>Macrophages.</text>
</comment>
<comment type="induction">
    <text evidence="18 20">By treatment with endotoxins or cytokines. Induced by lipopolysaccharides (LPS) in macrophages (in vitro) (PubMed:22073225, PubMed:24970700). Expression in the liver oscillates in a circadian manner with peak levels occurring during the late night (PubMed:22073225).</text>
</comment>
<comment type="PTM">
    <text evidence="16 17">Polyubiquitinated; mediated by SPSB1, SPSB2 and SPSB4, leading to proteasomal degradation.</text>
</comment>
<comment type="similarity">
    <text evidence="24">Belongs to the NOS family.</text>
</comment>
<protein>
    <recommendedName>
        <fullName>Nitric oxide synthase, inducible</fullName>
        <ecNumber evidence="3">1.14.13.39</ecNumber>
    </recommendedName>
    <alternativeName>
        <fullName>Inducible NO synthase</fullName>
        <shortName>Inducible NOS</shortName>
        <shortName>iNOS</shortName>
    </alternativeName>
    <alternativeName>
        <fullName>Macrophage NOS</fullName>
        <shortName>MAC-NOS</shortName>
    </alternativeName>
    <alternativeName>
        <fullName>NOS type II</fullName>
    </alternativeName>
    <alternativeName>
        <fullName>Peptidyl-cysteine S-nitrosylase NOS2</fullName>
    </alternativeName>
</protein>
<dbReference type="EC" id="1.14.13.39" evidence="3"/>
<dbReference type="EMBL" id="M87039">
    <property type="protein sequence ID" value="AAA39315.1"/>
    <property type="molecule type" value="mRNA"/>
</dbReference>
<dbReference type="EMBL" id="M92649">
    <property type="status" value="NOT_ANNOTATED_CDS"/>
    <property type="molecule type" value="mRNA"/>
</dbReference>
<dbReference type="EMBL" id="M84373">
    <property type="protein sequence ID" value="AAA39834.1"/>
    <property type="molecule type" value="mRNA"/>
</dbReference>
<dbReference type="EMBL" id="U43428">
    <property type="protein sequence ID" value="AAC52356.1"/>
    <property type="molecule type" value="mRNA"/>
</dbReference>
<dbReference type="EMBL" id="AF065919">
    <property type="protein sequence ID" value="AAC17914.1"/>
    <property type="molecule type" value="mRNA"/>
</dbReference>
<dbReference type="EMBL" id="AF065920">
    <property type="protein sequence ID" value="AAC17915.1"/>
    <property type="molecule type" value="mRNA"/>
</dbReference>
<dbReference type="EMBL" id="AF065921">
    <property type="protein sequence ID" value="AAC17916.2"/>
    <property type="molecule type" value="mRNA"/>
</dbReference>
<dbReference type="EMBL" id="AF065922">
    <property type="protein sequence ID" value="AAC17917.2"/>
    <property type="molecule type" value="mRNA"/>
</dbReference>
<dbReference type="EMBL" id="AF065923">
    <property type="protein sequence ID" value="AAC17918.2"/>
    <property type="molecule type" value="mRNA"/>
</dbReference>
<dbReference type="EMBL" id="AF427516">
    <property type="protein sequence ID" value="AAL24076.1"/>
    <property type="molecule type" value="Genomic_DNA"/>
</dbReference>
<dbReference type="EMBL" id="AY090567">
    <property type="protein sequence ID" value="AAM11887.1"/>
    <property type="molecule type" value="mRNA"/>
</dbReference>
<dbReference type="EMBL" id="AL592185">
    <property type="status" value="NOT_ANNOTATED_CDS"/>
    <property type="molecule type" value="Genomic_DNA"/>
</dbReference>
<dbReference type="EMBL" id="BC062378">
    <property type="protein sequence ID" value="AAH62378.1"/>
    <property type="molecule type" value="mRNA"/>
</dbReference>
<dbReference type="CCDS" id="CCDS25115.1"/>
<dbReference type="PIR" id="A43271">
    <property type="entry name" value="A43271"/>
</dbReference>
<dbReference type="RefSeq" id="NP_001300850.1">
    <property type="nucleotide sequence ID" value="NM_001313921.1"/>
</dbReference>
<dbReference type="RefSeq" id="NP_001300851.1">
    <property type="nucleotide sequence ID" value="NM_001313922.1"/>
</dbReference>
<dbReference type="RefSeq" id="NP_035057.1">
    <property type="nucleotide sequence ID" value="NM_010927.4"/>
</dbReference>
<dbReference type="PDB" id="1DD7">
    <property type="method" value="X-ray"/>
    <property type="resolution" value="2.25 A"/>
    <property type="chains" value="A=114-498"/>
</dbReference>
<dbReference type="PDB" id="1DF1">
    <property type="method" value="X-ray"/>
    <property type="resolution" value="2.35 A"/>
    <property type="chains" value="A/B=77-499"/>
</dbReference>
<dbReference type="PDB" id="1DWV">
    <property type="method" value="X-ray"/>
    <property type="resolution" value="2.35 A"/>
    <property type="chains" value="A/B=77-496"/>
</dbReference>
<dbReference type="PDB" id="1DWW">
    <property type="method" value="X-ray"/>
    <property type="resolution" value="2.35 A"/>
    <property type="chains" value="A/B=77-496"/>
</dbReference>
<dbReference type="PDB" id="1DWX">
    <property type="method" value="X-ray"/>
    <property type="resolution" value="2.60 A"/>
    <property type="chains" value="A/B=77-496"/>
</dbReference>
<dbReference type="PDB" id="1JWJ">
    <property type="method" value="X-ray"/>
    <property type="resolution" value="2.60 A"/>
    <property type="chains" value="A/B=66-498"/>
</dbReference>
<dbReference type="PDB" id="1JWK">
    <property type="method" value="X-ray"/>
    <property type="resolution" value="2.30 A"/>
    <property type="chains" value="A/B=66-498"/>
</dbReference>
<dbReference type="PDB" id="1M8D">
    <property type="method" value="X-ray"/>
    <property type="resolution" value="2.35 A"/>
    <property type="chains" value="A/B=65-498"/>
</dbReference>
<dbReference type="PDB" id="1M8E">
    <property type="method" value="X-ray"/>
    <property type="resolution" value="2.90 A"/>
    <property type="chains" value="A/B=65-498"/>
</dbReference>
<dbReference type="PDB" id="1M8H">
    <property type="method" value="X-ray"/>
    <property type="resolution" value="2.85 A"/>
    <property type="chains" value="A/B=65-498"/>
</dbReference>
<dbReference type="PDB" id="1M8I">
    <property type="method" value="X-ray"/>
    <property type="resolution" value="2.70 A"/>
    <property type="chains" value="A/B=65-498"/>
</dbReference>
<dbReference type="PDB" id="1M9T">
    <property type="method" value="X-ray"/>
    <property type="resolution" value="2.40 A"/>
    <property type="chains" value="A/B=65-498"/>
</dbReference>
<dbReference type="PDB" id="1N2N">
    <property type="method" value="X-ray"/>
    <property type="resolution" value="2.40 A"/>
    <property type="chains" value="A/B=77-495"/>
</dbReference>
<dbReference type="PDB" id="1NOC">
    <property type="method" value="X-ray"/>
    <property type="resolution" value="2.60 A"/>
    <property type="chains" value="A=115-498"/>
</dbReference>
<dbReference type="PDB" id="1NOD">
    <property type="method" value="X-ray"/>
    <property type="resolution" value="2.60 A"/>
    <property type="chains" value="A/B=77-499"/>
</dbReference>
<dbReference type="PDB" id="1NOS">
    <property type="method" value="X-ray"/>
    <property type="resolution" value="2.10 A"/>
    <property type="chains" value="A=115-498"/>
</dbReference>
<dbReference type="PDB" id="1QOM">
    <property type="method" value="X-ray"/>
    <property type="resolution" value="2.70 A"/>
    <property type="chains" value="A/B=65-498"/>
</dbReference>
<dbReference type="PDB" id="1QW4">
    <property type="method" value="X-ray"/>
    <property type="resolution" value="2.40 A"/>
    <property type="chains" value="A/B=77-495"/>
</dbReference>
<dbReference type="PDB" id="1QW5">
    <property type="method" value="X-ray"/>
    <property type="resolution" value="2.70 A"/>
    <property type="chains" value="A/B=77-495"/>
</dbReference>
<dbReference type="PDB" id="1R35">
    <property type="method" value="X-ray"/>
    <property type="resolution" value="2.30 A"/>
    <property type="chains" value="A/B=66-498"/>
</dbReference>
<dbReference type="PDB" id="1VAF">
    <property type="method" value="X-ray"/>
    <property type="resolution" value="2.90 A"/>
    <property type="chains" value="A/B=77-495"/>
</dbReference>
<dbReference type="PDB" id="2BHJ">
    <property type="method" value="X-ray"/>
    <property type="resolution" value="3.20 A"/>
    <property type="chains" value="A=77-498"/>
</dbReference>
<dbReference type="PDB" id="2NOD">
    <property type="method" value="X-ray"/>
    <property type="resolution" value="2.60 A"/>
    <property type="chains" value="A/B=77-499"/>
</dbReference>
<dbReference type="PDB" id="2NOS">
    <property type="method" value="X-ray"/>
    <property type="resolution" value="2.30 A"/>
    <property type="chains" value="A=115-498"/>
</dbReference>
<dbReference type="PDB" id="2ORO">
    <property type="method" value="X-ray"/>
    <property type="resolution" value="2.00 A"/>
    <property type="chains" value="A=114-498"/>
</dbReference>
<dbReference type="PDB" id="2ORP">
    <property type="method" value="X-ray"/>
    <property type="resolution" value="1.97 A"/>
    <property type="chains" value="A=114-498"/>
</dbReference>
<dbReference type="PDB" id="2ORQ">
    <property type="method" value="X-ray"/>
    <property type="resolution" value="2.10 A"/>
    <property type="chains" value="A=114-498"/>
</dbReference>
<dbReference type="PDB" id="2ORR">
    <property type="method" value="X-ray"/>
    <property type="resolution" value="2.00 A"/>
    <property type="chains" value="A=114-498"/>
</dbReference>
<dbReference type="PDB" id="2ORS">
    <property type="method" value="X-ray"/>
    <property type="resolution" value="2.00 A"/>
    <property type="chains" value="A=114-498"/>
</dbReference>
<dbReference type="PDB" id="2ORT">
    <property type="method" value="X-ray"/>
    <property type="resolution" value="1.87 A"/>
    <property type="chains" value="A=114-498"/>
</dbReference>
<dbReference type="PDB" id="2Y37">
    <property type="method" value="X-ray"/>
    <property type="resolution" value="2.60 A"/>
    <property type="chains" value="A/B=66-498"/>
</dbReference>
<dbReference type="PDB" id="3DWJ">
    <property type="method" value="X-ray"/>
    <property type="resolution" value="2.75 A"/>
    <property type="chains" value="A/B=66-496"/>
</dbReference>
<dbReference type="PDB" id="3E65">
    <property type="method" value="X-ray"/>
    <property type="resolution" value="2.05 A"/>
    <property type="chains" value="A/B=66-498"/>
</dbReference>
<dbReference type="PDB" id="3E67">
    <property type="method" value="X-ray"/>
    <property type="resolution" value="2.60 A"/>
    <property type="chains" value="A/B=66-498"/>
</dbReference>
<dbReference type="PDB" id="3E68">
    <property type="method" value="X-ray"/>
    <property type="resolution" value="2.20 A"/>
    <property type="chains" value="A/B=66-498"/>
</dbReference>
<dbReference type="PDB" id="3E6L">
    <property type="method" value="X-ray"/>
    <property type="resolution" value="2.30 A"/>
    <property type="chains" value="A/B=66-498"/>
</dbReference>
<dbReference type="PDB" id="3E6N">
    <property type="method" value="X-ray"/>
    <property type="resolution" value="2.40 A"/>
    <property type="chains" value="A/B=66-498"/>
</dbReference>
<dbReference type="PDB" id="3E6O">
    <property type="method" value="X-ray"/>
    <property type="resolution" value="2.60 A"/>
    <property type="chains" value="A/B=66-498"/>
</dbReference>
<dbReference type="PDB" id="3E6T">
    <property type="method" value="X-ray"/>
    <property type="resolution" value="2.50 A"/>
    <property type="chains" value="A/B=66-498"/>
</dbReference>
<dbReference type="PDB" id="3E7I">
    <property type="method" value="X-ray"/>
    <property type="resolution" value="2.90 A"/>
    <property type="chains" value="A/B=66-498"/>
</dbReference>
<dbReference type="PDB" id="3E7M">
    <property type="method" value="X-ray"/>
    <property type="resolution" value="2.00 A"/>
    <property type="chains" value="A/B=66-498"/>
</dbReference>
<dbReference type="PDB" id="3E7T">
    <property type="method" value="X-ray"/>
    <property type="resolution" value="2.60 A"/>
    <property type="chains" value="A/B=66-498"/>
</dbReference>
<dbReference type="PDB" id="3EAI">
    <property type="method" value="X-ray"/>
    <property type="resolution" value="2.20 A"/>
    <property type="chains" value="A/B=66-498"/>
</dbReference>
<dbReference type="PDB" id="3EBD">
    <property type="method" value="X-ray"/>
    <property type="resolution" value="2.40 A"/>
    <property type="chains" value="A/B=66-498"/>
</dbReference>
<dbReference type="PDB" id="3EBF">
    <property type="method" value="X-ray"/>
    <property type="resolution" value="2.29 A"/>
    <property type="chains" value="A/B=66-498"/>
</dbReference>
<dbReference type="PDB" id="3GOF">
    <property type="method" value="X-ray"/>
    <property type="resolution" value="1.45 A"/>
    <property type="chains" value="C/D=503-518"/>
</dbReference>
<dbReference type="PDB" id="3NOD">
    <property type="method" value="X-ray"/>
    <property type="resolution" value="2.70 A"/>
    <property type="chains" value="A/B=77-499"/>
</dbReference>
<dbReference type="PDB" id="3NQS">
    <property type="method" value="X-ray"/>
    <property type="resolution" value="2.20 A"/>
    <property type="chains" value="A/B=66-498"/>
</dbReference>
<dbReference type="PDB" id="3NW2">
    <property type="method" value="X-ray"/>
    <property type="resolution" value="2.80 A"/>
    <property type="chains" value="A/B=77-499"/>
</dbReference>
<dbReference type="PDB" id="4JS9">
    <property type="method" value="X-ray"/>
    <property type="resolution" value="2.78 A"/>
    <property type="chains" value="A/B=66-496"/>
</dbReference>
<dbReference type="PDB" id="4UX6">
    <property type="method" value="X-ray"/>
    <property type="resolution" value="3.00 A"/>
    <property type="chains" value="A=77-100, B=108-496"/>
</dbReference>
<dbReference type="PDBsum" id="1DD7"/>
<dbReference type="PDBsum" id="1DF1"/>
<dbReference type="PDBsum" id="1DWV"/>
<dbReference type="PDBsum" id="1DWW"/>
<dbReference type="PDBsum" id="1DWX"/>
<dbReference type="PDBsum" id="1JWJ"/>
<dbReference type="PDBsum" id="1JWK"/>
<dbReference type="PDBsum" id="1M8D"/>
<dbReference type="PDBsum" id="1M8E"/>
<dbReference type="PDBsum" id="1M8H"/>
<dbReference type="PDBsum" id="1M8I"/>
<dbReference type="PDBsum" id="1M9T"/>
<dbReference type="PDBsum" id="1N2N"/>
<dbReference type="PDBsum" id="1NOC"/>
<dbReference type="PDBsum" id="1NOD"/>
<dbReference type="PDBsum" id="1NOS"/>
<dbReference type="PDBsum" id="1QOM"/>
<dbReference type="PDBsum" id="1QW4"/>
<dbReference type="PDBsum" id="1QW5"/>
<dbReference type="PDBsum" id="1R35"/>
<dbReference type="PDBsum" id="1VAF"/>
<dbReference type="PDBsum" id="2BHJ"/>
<dbReference type="PDBsum" id="2NOD"/>
<dbReference type="PDBsum" id="2NOS"/>
<dbReference type="PDBsum" id="2ORO"/>
<dbReference type="PDBsum" id="2ORP"/>
<dbReference type="PDBsum" id="2ORQ"/>
<dbReference type="PDBsum" id="2ORR"/>
<dbReference type="PDBsum" id="2ORS"/>
<dbReference type="PDBsum" id="2ORT"/>
<dbReference type="PDBsum" id="2Y37"/>
<dbReference type="PDBsum" id="3DWJ"/>
<dbReference type="PDBsum" id="3E65"/>
<dbReference type="PDBsum" id="3E67"/>
<dbReference type="PDBsum" id="3E68"/>
<dbReference type="PDBsum" id="3E6L"/>
<dbReference type="PDBsum" id="3E6N"/>
<dbReference type="PDBsum" id="3E6O"/>
<dbReference type="PDBsum" id="3E6T"/>
<dbReference type="PDBsum" id="3E7I"/>
<dbReference type="PDBsum" id="3E7M"/>
<dbReference type="PDBsum" id="3E7T"/>
<dbReference type="PDBsum" id="3EAI"/>
<dbReference type="PDBsum" id="3EBD"/>
<dbReference type="PDBsum" id="3EBF"/>
<dbReference type="PDBsum" id="3GOF"/>
<dbReference type="PDBsum" id="3NOD"/>
<dbReference type="PDBsum" id="3NQS"/>
<dbReference type="PDBsum" id="3NW2"/>
<dbReference type="PDBsum" id="4JS9"/>
<dbReference type="PDBsum" id="4UX6"/>
<dbReference type="EMDB" id="EMD-2718"/>
<dbReference type="EMDB" id="EMD-2719"/>
<dbReference type="EMDB" id="EMD-2720"/>
<dbReference type="EMDB" id="EMD-2721"/>
<dbReference type="EMDB" id="EMD-2722"/>
<dbReference type="EMDB" id="EMD-2723"/>
<dbReference type="EMDB" id="EMD-2724"/>
<dbReference type="EMDB" id="EMD-2725"/>
<dbReference type="EMDB" id="EMD-2726"/>
<dbReference type="EMDB" id="EMD-2727"/>
<dbReference type="EMDB" id="EMD-2728"/>
<dbReference type="EMDB" id="EMD-2729"/>
<dbReference type="EMDB" id="EMD-2730"/>
<dbReference type="EMDB" id="EMD-2731"/>
<dbReference type="EMDB" id="EMD-2732"/>
<dbReference type="EMDB" id="EMD-2733"/>
<dbReference type="EMDB" id="EMD-2734"/>
<dbReference type="EMDB" id="EMD-2735"/>
<dbReference type="EMDB" id="EMD-2736"/>
<dbReference type="EMDB" id="EMD-2737"/>
<dbReference type="EMDB" id="EMD-2738"/>
<dbReference type="EMDB" id="EMD-2739"/>
<dbReference type="EMDB" id="EMD-2740"/>
<dbReference type="EMDB" id="EMD-2741"/>
<dbReference type="EMDB" id="EMD-2742"/>
<dbReference type="EMDB" id="EMD-2743"/>
<dbReference type="EMDB" id="EMD-2744"/>
<dbReference type="EMDB" id="EMD-2745"/>
<dbReference type="EMDB" id="EMD-2746"/>
<dbReference type="EMDB" id="EMD-2747"/>
<dbReference type="EMDB" id="EMD-2748"/>
<dbReference type="EMDB" id="EMD-2749"/>
<dbReference type="SMR" id="P29477"/>
<dbReference type="BioGRID" id="201806">
    <property type="interactions" value="9"/>
</dbReference>
<dbReference type="ComplexPortal" id="CPX-53">
    <property type="entry name" value="iNOS-S100A8/A9 complex"/>
</dbReference>
<dbReference type="DIP" id="DIP-31080N"/>
<dbReference type="FunCoup" id="P29477">
    <property type="interactions" value="703"/>
</dbReference>
<dbReference type="IntAct" id="P29477">
    <property type="interactions" value="2"/>
</dbReference>
<dbReference type="MINT" id="P29477"/>
<dbReference type="STRING" id="10090.ENSMUSP00000018610"/>
<dbReference type="BindingDB" id="P29477"/>
<dbReference type="ChEMBL" id="CHEMBL3464"/>
<dbReference type="DrugCentral" id="P29477"/>
<dbReference type="GlyGen" id="P29477">
    <property type="glycosylation" value="4 sites, 1 O-linked glycan (1 site)"/>
</dbReference>
<dbReference type="iPTMnet" id="P29477"/>
<dbReference type="PhosphoSitePlus" id="P29477"/>
<dbReference type="SwissPalm" id="P29477"/>
<dbReference type="PaxDb" id="10090-ENSMUSP00000018610"/>
<dbReference type="ProteomicsDB" id="293704"/>
<dbReference type="Antibodypedia" id="4550">
    <property type="antibodies" value="1124 antibodies from 47 providers"/>
</dbReference>
<dbReference type="DNASU" id="18126"/>
<dbReference type="Ensembl" id="ENSMUST00000018610.7">
    <property type="protein sequence ID" value="ENSMUSP00000018610.7"/>
    <property type="gene ID" value="ENSMUSG00000020826.10"/>
</dbReference>
<dbReference type="GeneID" id="18126"/>
<dbReference type="KEGG" id="mmu:18126"/>
<dbReference type="UCSC" id="uc007kkc.1">
    <property type="organism name" value="mouse"/>
</dbReference>
<dbReference type="AGR" id="MGI:97361"/>
<dbReference type="CTD" id="4843"/>
<dbReference type="MGI" id="MGI:97361">
    <property type="gene designation" value="Nos2"/>
</dbReference>
<dbReference type="VEuPathDB" id="HostDB:ENSMUSG00000020826"/>
<dbReference type="eggNOG" id="KOG1158">
    <property type="taxonomic scope" value="Eukaryota"/>
</dbReference>
<dbReference type="GeneTree" id="ENSGT00940000159752"/>
<dbReference type="HOGENOM" id="CLU_001570_16_0_1"/>
<dbReference type="InParanoid" id="P29477"/>
<dbReference type="OMA" id="CRHIRYA"/>
<dbReference type="OrthoDB" id="1688044at2759"/>
<dbReference type="PhylomeDB" id="P29477"/>
<dbReference type="TreeFam" id="TF324410"/>
<dbReference type="BRENDA" id="1.14.13.39">
    <property type="organism ID" value="3474"/>
</dbReference>
<dbReference type="Reactome" id="R-MMU-1222556">
    <property type="pathway name" value="ROS and RNS production in phagocytes"/>
</dbReference>
<dbReference type="Reactome" id="R-MMU-392154">
    <property type="pathway name" value="Nitric oxide stimulates guanylate cyclase"/>
</dbReference>
<dbReference type="Reactome" id="R-MMU-9033241">
    <property type="pathway name" value="Peroxisomal protein import"/>
</dbReference>
<dbReference type="BioGRID-ORCS" id="18126">
    <property type="hits" value="4 hits in 81 CRISPR screens"/>
</dbReference>
<dbReference type="EvolutionaryTrace" id="P29477"/>
<dbReference type="PRO" id="PR:P29477"/>
<dbReference type="Proteomes" id="UP000000589">
    <property type="component" value="Chromosome 11"/>
</dbReference>
<dbReference type="RNAct" id="P29477">
    <property type="molecule type" value="protein"/>
</dbReference>
<dbReference type="Bgee" id="ENSMUSG00000020826">
    <property type="expression patterns" value="Expressed in ectoplacental cone and 40 other cell types or tissues"/>
</dbReference>
<dbReference type="ExpressionAtlas" id="P29477">
    <property type="expression patterns" value="baseline and differential"/>
</dbReference>
<dbReference type="GO" id="GO:0030863">
    <property type="term" value="C:cortical cytoskeleton"/>
    <property type="evidence" value="ECO:0000314"/>
    <property type="project" value="MGI"/>
</dbReference>
<dbReference type="GO" id="GO:0005737">
    <property type="term" value="C:cytoplasm"/>
    <property type="evidence" value="ECO:0000314"/>
    <property type="project" value="MGI"/>
</dbReference>
<dbReference type="GO" id="GO:0005829">
    <property type="term" value="C:cytosol"/>
    <property type="evidence" value="ECO:0000304"/>
    <property type="project" value="UniProtKB"/>
</dbReference>
<dbReference type="GO" id="GO:0048471">
    <property type="term" value="C:perinuclear region of cytoplasm"/>
    <property type="evidence" value="ECO:0000314"/>
    <property type="project" value="MGI"/>
</dbReference>
<dbReference type="GO" id="GO:0005777">
    <property type="term" value="C:peroxisome"/>
    <property type="evidence" value="ECO:0007669"/>
    <property type="project" value="Ensembl"/>
</dbReference>
<dbReference type="GO" id="GO:0034618">
    <property type="term" value="F:arginine binding"/>
    <property type="evidence" value="ECO:0000314"/>
    <property type="project" value="BHF-UCL"/>
</dbReference>
<dbReference type="GO" id="GO:0005516">
    <property type="term" value="F:calmodulin binding"/>
    <property type="evidence" value="ECO:0000304"/>
    <property type="project" value="UniProtKB"/>
</dbReference>
<dbReference type="GO" id="GO:0050660">
    <property type="term" value="F:flavin adenine dinucleotide binding"/>
    <property type="evidence" value="ECO:0000314"/>
    <property type="project" value="BHF-UCL"/>
</dbReference>
<dbReference type="GO" id="GO:0010181">
    <property type="term" value="F:FMN binding"/>
    <property type="evidence" value="ECO:0000314"/>
    <property type="project" value="BHF-UCL"/>
</dbReference>
<dbReference type="GO" id="GO:0020037">
    <property type="term" value="F:heme binding"/>
    <property type="evidence" value="ECO:0000314"/>
    <property type="project" value="BHF-UCL"/>
</dbReference>
<dbReference type="GO" id="GO:0046872">
    <property type="term" value="F:metal ion binding"/>
    <property type="evidence" value="ECO:0007669"/>
    <property type="project" value="UniProtKB-KW"/>
</dbReference>
<dbReference type="GO" id="GO:0050661">
    <property type="term" value="F:NADP binding"/>
    <property type="evidence" value="ECO:0007669"/>
    <property type="project" value="InterPro"/>
</dbReference>
<dbReference type="GO" id="GO:0004517">
    <property type="term" value="F:nitric-oxide synthase activity"/>
    <property type="evidence" value="ECO:0000314"/>
    <property type="project" value="BHF-UCL"/>
</dbReference>
<dbReference type="GO" id="GO:0042803">
    <property type="term" value="F:protein homodimerization activity"/>
    <property type="evidence" value="ECO:0000314"/>
    <property type="project" value="BHF-UCL"/>
</dbReference>
<dbReference type="GO" id="GO:0034617">
    <property type="term" value="F:tetrahydrobiopterin binding"/>
    <property type="evidence" value="ECO:0000314"/>
    <property type="project" value="BHF-UCL"/>
</dbReference>
<dbReference type="GO" id="GO:0006527">
    <property type="term" value="P:arginine catabolic process"/>
    <property type="evidence" value="ECO:0000314"/>
    <property type="project" value="BHF-UCL"/>
</dbReference>
<dbReference type="GO" id="GO:0071345">
    <property type="term" value="P:cellular response to cytokine stimulus"/>
    <property type="evidence" value="ECO:0000266"/>
    <property type="project" value="MGI"/>
</dbReference>
<dbReference type="GO" id="GO:0071222">
    <property type="term" value="P:cellular response to lipopolysaccharide"/>
    <property type="evidence" value="ECO:0000314"/>
    <property type="project" value="MGI"/>
</dbReference>
<dbReference type="GO" id="GO:0071346">
    <property type="term" value="P:cellular response to type II interferon"/>
    <property type="evidence" value="ECO:0000314"/>
    <property type="project" value="MGI"/>
</dbReference>
<dbReference type="GO" id="GO:0071466">
    <property type="term" value="P:cellular response to xenobiotic stimulus"/>
    <property type="evidence" value="ECO:0000314"/>
    <property type="project" value="MGI"/>
</dbReference>
<dbReference type="GO" id="GO:0007623">
    <property type="term" value="P:circadian rhythm"/>
    <property type="evidence" value="ECO:0000270"/>
    <property type="project" value="UniProtKB"/>
</dbReference>
<dbReference type="GO" id="GO:0042742">
    <property type="term" value="P:defense response to bacterium"/>
    <property type="evidence" value="ECO:0000315"/>
    <property type="project" value="MGI"/>
</dbReference>
<dbReference type="GO" id="GO:0038096">
    <property type="term" value="P:Fc-gamma receptor signaling pathway involved in phagocytosis"/>
    <property type="evidence" value="ECO:0007669"/>
    <property type="project" value="Ensembl"/>
</dbReference>
<dbReference type="GO" id="GO:0006954">
    <property type="term" value="P:inflammatory response"/>
    <property type="evidence" value="ECO:0000304"/>
    <property type="project" value="UniProtKB"/>
</dbReference>
<dbReference type="GO" id="GO:0010629">
    <property type="term" value="P:negative regulation of gene expression"/>
    <property type="evidence" value="ECO:0000316"/>
    <property type="project" value="UniProtKB"/>
</dbReference>
<dbReference type="GO" id="GO:0042177">
    <property type="term" value="P:negative regulation of protein catabolic process"/>
    <property type="evidence" value="ECO:0000314"/>
    <property type="project" value="BHF-UCL"/>
</dbReference>
<dbReference type="GO" id="GO:0006809">
    <property type="term" value="P:nitric oxide biosynthetic process"/>
    <property type="evidence" value="ECO:0000314"/>
    <property type="project" value="BHF-UCL"/>
</dbReference>
<dbReference type="GO" id="GO:0018119">
    <property type="term" value="P:peptidyl-cysteine S-nitrosylation"/>
    <property type="evidence" value="ECO:0000314"/>
    <property type="project" value="UniProtKB"/>
</dbReference>
<dbReference type="GO" id="GO:0032755">
    <property type="term" value="P:positive regulation of interleukin-6 production"/>
    <property type="evidence" value="ECO:0000250"/>
    <property type="project" value="UniProtKB"/>
</dbReference>
<dbReference type="GO" id="GO:0032757">
    <property type="term" value="P:positive regulation of interleukin-8 production"/>
    <property type="evidence" value="ECO:0000250"/>
    <property type="project" value="UniProtKB"/>
</dbReference>
<dbReference type="GO" id="GO:0032310">
    <property type="term" value="P:prostaglandin secretion"/>
    <property type="evidence" value="ECO:0000250"/>
    <property type="project" value="UniProtKB"/>
</dbReference>
<dbReference type="GO" id="GO:0042127">
    <property type="term" value="P:regulation of cell population proliferation"/>
    <property type="evidence" value="ECO:0000316"/>
    <property type="project" value="MGI"/>
</dbReference>
<dbReference type="GO" id="GO:1900015">
    <property type="term" value="P:regulation of cytokine production involved in inflammatory response"/>
    <property type="evidence" value="ECO:0000250"/>
    <property type="project" value="UniProtKB"/>
</dbReference>
<dbReference type="GO" id="GO:0050796">
    <property type="term" value="P:regulation of insulin secretion"/>
    <property type="evidence" value="ECO:0007669"/>
    <property type="project" value="Ensembl"/>
</dbReference>
<dbReference type="GO" id="GO:0009617">
    <property type="term" value="P:response to bacterium"/>
    <property type="evidence" value="ECO:0000270"/>
    <property type="project" value="MGI"/>
</dbReference>
<dbReference type="GO" id="GO:0001666">
    <property type="term" value="P:response to hypoxia"/>
    <property type="evidence" value="ECO:0000314"/>
    <property type="project" value="MGI"/>
</dbReference>
<dbReference type="GO" id="GO:0032496">
    <property type="term" value="P:response to lipopolysaccharide"/>
    <property type="evidence" value="ECO:0000314"/>
    <property type="project" value="UniProtKB"/>
</dbReference>
<dbReference type="GO" id="GO:0006801">
    <property type="term" value="P:superoxide metabolic process"/>
    <property type="evidence" value="ECO:0000315"/>
    <property type="project" value="MGI"/>
</dbReference>
<dbReference type="CDD" id="cd00795">
    <property type="entry name" value="NOS_oxygenase_euk"/>
    <property type="match status" value="1"/>
</dbReference>
<dbReference type="FunFam" id="1.20.990.10:FF:000006">
    <property type="entry name" value="Nitric oxide synthase"/>
    <property type="match status" value="1"/>
</dbReference>
<dbReference type="FunFam" id="3.40.50.360:FF:000039">
    <property type="entry name" value="Nitric oxide synthase"/>
    <property type="match status" value="1"/>
</dbReference>
<dbReference type="FunFam" id="3.40.50.80:FF:000003">
    <property type="entry name" value="Nitric oxide synthase"/>
    <property type="match status" value="1"/>
</dbReference>
<dbReference type="FunFam" id="3.90.1230.10:FF:000001">
    <property type="entry name" value="Nitric oxide synthase, brain"/>
    <property type="match status" value="1"/>
</dbReference>
<dbReference type="FunFam" id="3.90.440.10:FF:000005">
    <property type="entry name" value="Nitric oxide synthase, inducible"/>
    <property type="match status" value="1"/>
</dbReference>
<dbReference type="Gene3D" id="3.40.50.360">
    <property type="match status" value="2"/>
</dbReference>
<dbReference type="Gene3D" id="6.10.250.410">
    <property type="match status" value="1"/>
</dbReference>
<dbReference type="Gene3D" id="1.20.990.10">
    <property type="entry name" value="NADPH-cytochrome p450 Reductase, Chain A, domain 3"/>
    <property type="match status" value="1"/>
</dbReference>
<dbReference type="Gene3D" id="3.90.340.10">
    <property type="entry name" value="Nitric Oxide Synthase, Chain A, domain 1"/>
    <property type="match status" value="1"/>
</dbReference>
<dbReference type="Gene3D" id="3.90.1230.10">
    <property type="entry name" value="Nitric Oxide Synthase, Chain A, domain 3"/>
    <property type="match status" value="1"/>
</dbReference>
<dbReference type="Gene3D" id="3.90.440.10">
    <property type="entry name" value="Nitric Oxide Synthase,Heme Domain,Chain A domain 2"/>
    <property type="match status" value="1"/>
</dbReference>
<dbReference type="Gene3D" id="3.40.50.80">
    <property type="entry name" value="Nucleotide-binding domain of ferredoxin-NADP reductase (FNR) module"/>
    <property type="match status" value="1"/>
</dbReference>
<dbReference type="Gene3D" id="2.40.30.10">
    <property type="entry name" value="Translation factors"/>
    <property type="match status" value="1"/>
</dbReference>
<dbReference type="InterPro" id="IPR003097">
    <property type="entry name" value="CysJ-like_FAD-binding"/>
</dbReference>
<dbReference type="InterPro" id="IPR017927">
    <property type="entry name" value="FAD-bd_FR_type"/>
</dbReference>
<dbReference type="InterPro" id="IPR001094">
    <property type="entry name" value="Flavdoxin-like"/>
</dbReference>
<dbReference type="InterPro" id="IPR008254">
    <property type="entry name" value="Flavodoxin/NO_synth"/>
</dbReference>
<dbReference type="InterPro" id="IPR001709">
    <property type="entry name" value="Flavoprot_Pyr_Nucl_cyt_Rdtase"/>
</dbReference>
<dbReference type="InterPro" id="IPR029039">
    <property type="entry name" value="Flavoprotein-like_sf"/>
</dbReference>
<dbReference type="InterPro" id="IPR039261">
    <property type="entry name" value="FNR_nucleotide-bd"/>
</dbReference>
<dbReference type="InterPro" id="IPR023173">
    <property type="entry name" value="NADPH_Cyt_P450_Rdtase_alpha"/>
</dbReference>
<dbReference type="InterPro" id="IPR050607">
    <property type="entry name" value="NOS"/>
</dbReference>
<dbReference type="InterPro" id="IPR044943">
    <property type="entry name" value="NOS_dom_1"/>
</dbReference>
<dbReference type="InterPro" id="IPR044940">
    <property type="entry name" value="NOS_dom_2"/>
</dbReference>
<dbReference type="InterPro" id="IPR044944">
    <property type="entry name" value="NOS_dom_3"/>
</dbReference>
<dbReference type="InterPro" id="IPR012144">
    <property type="entry name" value="NOS_euk"/>
</dbReference>
<dbReference type="InterPro" id="IPR004030">
    <property type="entry name" value="NOS_N"/>
</dbReference>
<dbReference type="InterPro" id="IPR036119">
    <property type="entry name" value="NOS_N_sf"/>
</dbReference>
<dbReference type="InterPro" id="IPR001433">
    <property type="entry name" value="OxRdtase_FAD/NAD-bd"/>
</dbReference>
<dbReference type="InterPro" id="IPR017938">
    <property type="entry name" value="Riboflavin_synthase-like_b-brl"/>
</dbReference>
<dbReference type="PANTHER" id="PTHR43410:SF4">
    <property type="entry name" value="NITRIC OXIDE SYNTHASE"/>
    <property type="match status" value="1"/>
</dbReference>
<dbReference type="PANTHER" id="PTHR43410">
    <property type="entry name" value="NITRIC OXIDE SYNTHASE OXYGENASE"/>
    <property type="match status" value="1"/>
</dbReference>
<dbReference type="Pfam" id="PF00667">
    <property type="entry name" value="FAD_binding_1"/>
    <property type="match status" value="1"/>
</dbReference>
<dbReference type="Pfam" id="PF00258">
    <property type="entry name" value="Flavodoxin_1"/>
    <property type="match status" value="1"/>
</dbReference>
<dbReference type="Pfam" id="PF00175">
    <property type="entry name" value="NAD_binding_1"/>
    <property type="match status" value="1"/>
</dbReference>
<dbReference type="Pfam" id="PF02898">
    <property type="entry name" value="NO_synthase"/>
    <property type="match status" value="1"/>
</dbReference>
<dbReference type="PIRSF" id="PIRSF000333">
    <property type="entry name" value="NOS"/>
    <property type="match status" value="1"/>
</dbReference>
<dbReference type="PRINTS" id="PR00369">
    <property type="entry name" value="FLAVODOXIN"/>
</dbReference>
<dbReference type="PRINTS" id="PR00371">
    <property type="entry name" value="FPNCR"/>
</dbReference>
<dbReference type="SUPFAM" id="SSF52343">
    <property type="entry name" value="Ferredoxin reductase-like, C-terminal NADP-linked domain"/>
    <property type="match status" value="1"/>
</dbReference>
<dbReference type="SUPFAM" id="SSF52218">
    <property type="entry name" value="Flavoproteins"/>
    <property type="match status" value="1"/>
</dbReference>
<dbReference type="SUPFAM" id="SSF56512">
    <property type="entry name" value="Nitric oxide (NO) synthase oxygenase domain"/>
    <property type="match status" value="1"/>
</dbReference>
<dbReference type="SUPFAM" id="SSF63380">
    <property type="entry name" value="Riboflavin synthase domain-like"/>
    <property type="match status" value="1"/>
</dbReference>
<dbReference type="PROSITE" id="PS51384">
    <property type="entry name" value="FAD_FR"/>
    <property type="match status" value="1"/>
</dbReference>
<dbReference type="PROSITE" id="PS50902">
    <property type="entry name" value="FLAVODOXIN_LIKE"/>
    <property type="match status" value="1"/>
</dbReference>
<dbReference type="PROSITE" id="PS60001">
    <property type="entry name" value="NOS"/>
    <property type="match status" value="1"/>
</dbReference>
<feature type="chain" id="PRO_0000170934" description="Nitric oxide synthase, inducible">
    <location>
        <begin position="1"/>
        <end position="1144"/>
    </location>
</feature>
<feature type="domain" description="Flavodoxin-like" evidence="6">
    <location>
        <begin position="533"/>
        <end position="671"/>
    </location>
</feature>
<feature type="domain" description="FAD-binding FR-type" evidence="7">
    <location>
        <begin position="724"/>
        <end position="964"/>
    </location>
</feature>
<feature type="region of interest" description="Disordered" evidence="8">
    <location>
        <begin position="37"/>
        <end position="59"/>
    </location>
</feature>
<feature type="region of interest" description="Calmodulin-binding" evidence="3">
    <location>
        <begin position="509"/>
        <end position="529"/>
    </location>
</feature>
<feature type="short sequence motif" description="DINNN-motif; mediates interaction with SPSB1, SPSB2 and SPSB4" evidence="16">
    <location>
        <begin position="23"/>
        <end position="27"/>
    </location>
</feature>
<feature type="compositionally biased region" description="Polar residues" evidence="8">
    <location>
        <begin position="47"/>
        <end position="59"/>
    </location>
</feature>
<feature type="binding site" evidence="10 11 14 25 26 27 36">
    <location>
        <position position="104"/>
    </location>
    <ligand>
        <name>Zn(2+)</name>
        <dbReference type="ChEBI" id="CHEBI:29105"/>
        <note>ligand shared between homodimeric partners</note>
    </ligand>
</feature>
<feature type="binding site" evidence="10 11 14 25 26 27 36">
    <location>
        <position position="109"/>
    </location>
    <ligand>
        <name>Zn(2+)</name>
        <dbReference type="ChEBI" id="CHEBI:29105"/>
        <note>ligand shared between homodimeric partners</note>
    </ligand>
</feature>
<feature type="binding site" evidence="10 11 12 13 14 23 25 28 29 31 32 33 34 35 36 38 40 41 43">
    <location>
        <position position="112"/>
    </location>
    <ligand>
        <name>(6R)-L-erythro-5,6,7,8-tetrahydrobiopterin</name>
        <dbReference type="ChEBI" id="CHEBI:59560"/>
    </ligand>
</feature>
<feature type="binding site" description="axial binding residue" evidence="10 11 12 13 14 22 23 25 26 27 28 29 30 31 32 33 34 35 36 37 38 39 40 41 42 43">
    <location>
        <position position="194"/>
    </location>
    <ligand>
        <name>heme b</name>
        <dbReference type="ChEBI" id="CHEBI:60344"/>
    </ligand>
    <ligandPart>
        <name>Fe</name>
        <dbReference type="ChEBI" id="CHEBI:18248"/>
    </ligandPart>
</feature>
<feature type="binding site" evidence="1">
    <location>
        <position position="257"/>
    </location>
    <ligand>
        <name>L-arginine</name>
        <dbReference type="ChEBI" id="CHEBI:32682"/>
    </ligand>
</feature>
<feature type="binding site" evidence="1">
    <location>
        <position position="366"/>
    </location>
    <ligand>
        <name>L-arginine</name>
        <dbReference type="ChEBI" id="CHEBI:32682"/>
    </ligand>
</feature>
<feature type="binding site" evidence="1">
    <location>
        <position position="367"/>
    </location>
    <ligand>
        <name>L-arginine</name>
        <dbReference type="ChEBI" id="CHEBI:32682"/>
    </ligand>
</feature>
<feature type="binding site" evidence="1">
    <location>
        <position position="371"/>
    </location>
    <ligand>
        <name>L-arginine</name>
        <dbReference type="ChEBI" id="CHEBI:32682"/>
    </ligand>
</feature>
<feature type="binding site" evidence="10 11 12 13 14 23 25 28 29 30 31 32 33 34 35 36 38 40 43">
    <location>
        <position position="375"/>
    </location>
    <ligand>
        <name>(6R)-L-erythro-5,6,7,8-tetrahydrobiopterin</name>
        <dbReference type="ChEBI" id="CHEBI:59560"/>
    </ligand>
</feature>
<feature type="binding site" evidence="10 13 14 25 35 36">
    <location>
        <position position="456"/>
    </location>
    <ligand>
        <name>(6R)-L-erythro-5,6,7,8-tetrahydrobiopterin</name>
        <dbReference type="ChEBI" id="CHEBI:59560"/>
    </ligand>
</feature>
<feature type="binding site" evidence="10 11 13 14 23 25 28 31 32 34 35 36 38 40 41 43">
    <location>
        <position position="457"/>
    </location>
    <ligand>
        <name>(6R)-L-erythro-5,6,7,8-tetrahydrobiopterin</name>
        <dbReference type="ChEBI" id="CHEBI:59560"/>
    </ligand>
</feature>
<feature type="binding site" evidence="10 11 12 13 14 23 25 28 29 30 31 32 33 34 36 38 40 41 43">
    <location>
        <position position="470"/>
    </location>
    <ligand>
        <name>(6R)-L-erythro-5,6,7,8-tetrahydrobiopterin</name>
        <dbReference type="ChEBI" id="CHEBI:59560"/>
    </ligand>
</feature>
<feature type="binding site" evidence="10 11 23 25 28 38 40 41 43">
    <location>
        <position position="485"/>
    </location>
    <ligand>
        <name>heme b</name>
        <dbReference type="ChEBI" id="CHEBI:60344"/>
    </ligand>
</feature>
<feature type="binding site" evidence="3">
    <location>
        <position position="539"/>
    </location>
    <ligand>
        <name>FMN</name>
        <dbReference type="ChEBI" id="CHEBI:58210"/>
    </ligand>
</feature>
<feature type="binding site" evidence="3">
    <location>
        <position position="540"/>
    </location>
    <ligand>
        <name>FMN</name>
        <dbReference type="ChEBI" id="CHEBI:58210"/>
    </ligand>
</feature>
<feature type="binding site" evidence="3">
    <location>
        <position position="541"/>
    </location>
    <ligand>
        <name>FMN</name>
        <dbReference type="ChEBI" id="CHEBI:58210"/>
    </ligand>
</feature>
<feature type="binding site" evidence="3">
    <location>
        <position position="543"/>
    </location>
    <ligand>
        <name>FMN</name>
        <dbReference type="ChEBI" id="CHEBI:58210"/>
    </ligand>
</feature>
<feature type="binding site" evidence="3">
    <location>
        <position position="544"/>
    </location>
    <ligand>
        <name>FMN</name>
        <dbReference type="ChEBI" id="CHEBI:58210"/>
    </ligand>
</feature>
<feature type="binding site" evidence="3">
    <location>
        <position position="585"/>
    </location>
    <ligand>
        <name>FMN</name>
        <dbReference type="ChEBI" id="CHEBI:58210"/>
    </ligand>
</feature>
<feature type="binding site" evidence="3">
    <location>
        <position position="586"/>
    </location>
    <ligand>
        <name>FMN</name>
        <dbReference type="ChEBI" id="CHEBI:58210"/>
    </ligand>
</feature>
<feature type="binding site" evidence="3">
    <location>
        <position position="622"/>
    </location>
    <ligand>
        <name>FMN</name>
        <dbReference type="ChEBI" id="CHEBI:58210"/>
    </ligand>
</feature>
<feature type="binding site" evidence="3">
    <location>
        <position position="629"/>
    </location>
    <ligand>
        <name>FMN</name>
        <dbReference type="ChEBI" id="CHEBI:58210"/>
    </ligand>
</feature>
<feature type="binding site" evidence="3">
    <location>
        <position position="655"/>
    </location>
    <ligand>
        <name>FMN</name>
        <dbReference type="ChEBI" id="CHEBI:58210"/>
    </ligand>
</feature>
<feature type="binding site" evidence="3">
    <location>
        <position position="659"/>
    </location>
    <ligand>
        <name>FMN</name>
        <dbReference type="ChEBI" id="CHEBI:58210"/>
    </ligand>
</feature>
<feature type="binding site" evidence="2">
    <location>
        <position position="744"/>
    </location>
    <ligand>
        <name>NADP(+)</name>
        <dbReference type="ChEBI" id="CHEBI:58349"/>
    </ligand>
</feature>
<feature type="binding site" evidence="2">
    <location>
        <position position="766"/>
    </location>
    <ligand>
        <name>FAD</name>
        <dbReference type="ChEBI" id="CHEBI:57692"/>
    </ligand>
</feature>
<feature type="binding site" evidence="2">
    <location>
        <position position="900"/>
    </location>
    <ligand>
        <name>FAD</name>
        <dbReference type="ChEBI" id="CHEBI:57692"/>
    </ligand>
</feature>
<feature type="binding site" evidence="2">
    <location>
        <position position="902"/>
    </location>
    <ligand>
        <name>FAD</name>
        <dbReference type="ChEBI" id="CHEBI:57692"/>
    </ligand>
</feature>
<feature type="binding site" evidence="2">
    <location>
        <position position="903"/>
    </location>
    <ligand>
        <name>FAD</name>
        <dbReference type="ChEBI" id="CHEBI:57692"/>
    </ligand>
</feature>
<feature type="binding site" evidence="2">
    <location>
        <position position="918"/>
    </location>
    <ligand>
        <name>FAD</name>
        <dbReference type="ChEBI" id="CHEBI:57692"/>
    </ligand>
</feature>
<feature type="binding site" evidence="2">
    <location>
        <position position="920"/>
    </location>
    <ligand>
        <name>FAD</name>
        <dbReference type="ChEBI" id="CHEBI:57692"/>
    </ligand>
</feature>
<feature type="binding site" evidence="2">
    <location>
        <position position="923"/>
    </location>
    <ligand>
        <name>NADP(+)</name>
        <dbReference type="ChEBI" id="CHEBI:58349"/>
    </ligand>
</feature>
<feature type="binding site" evidence="2">
    <location>
        <position position="924"/>
    </location>
    <ligand>
        <name>FAD</name>
        <dbReference type="ChEBI" id="CHEBI:57692"/>
    </ligand>
</feature>
<feature type="binding site" evidence="2">
    <location>
        <position position="937"/>
    </location>
    <ligand>
        <name>FAD</name>
        <dbReference type="ChEBI" id="CHEBI:57692"/>
    </ligand>
</feature>
<feature type="binding site" evidence="2">
    <location>
        <position position="938"/>
    </location>
    <ligand>
        <name>FAD</name>
        <dbReference type="ChEBI" id="CHEBI:57692"/>
    </ligand>
</feature>
<feature type="binding site" evidence="2">
    <location>
        <position position="939"/>
    </location>
    <ligand>
        <name>FAD</name>
        <dbReference type="ChEBI" id="CHEBI:57692"/>
    </ligand>
</feature>
<feature type="binding site" evidence="2">
    <location>
        <position position="978"/>
    </location>
    <ligand>
        <name>NADP(+)</name>
        <dbReference type="ChEBI" id="CHEBI:58349"/>
    </ligand>
</feature>
<feature type="binding site" evidence="2">
    <location>
        <position position="1011"/>
    </location>
    <ligand>
        <name>NADP(+)</name>
        <dbReference type="ChEBI" id="CHEBI:58349"/>
    </ligand>
</feature>
<feature type="binding site" evidence="2">
    <location>
        <position position="1040"/>
    </location>
    <ligand>
        <name>NADP(+)</name>
        <dbReference type="ChEBI" id="CHEBI:58349"/>
    </ligand>
</feature>
<feature type="binding site" evidence="2">
    <location>
        <position position="1041"/>
    </location>
    <ligand>
        <name>NADP(+)</name>
        <dbReference type="ChEBI" id="CHEBI:58349"/>
    </ligand>
</feature>
<feature type="binding site" evidence="2">
    <location>
        <position position="1047"/>
    </location>
    <ligand>
        <name>NADP(+)</name>
        <dbReference type="ChEBI" id="CHEBI:58349"/>
    </ligand>
</feature>
<feature type="binding site" evidence="2">
    <location>
        <position position="1049"/>
    </location>
    <ligand>
        <name>NADP(+)</name>
        <dbReference type="ChEBI" id="CHEBI:58349"/>
    </ligand>
</feature>
<feature type="binding site" evidence="2">
    <location>
        <position position="1051"/>
    </location>
    <ligand>
        <name>NADP(+)</name>
        <dbReference type="ChEBI" id="CHEBI:58349"/>
    </ligand>
</feature>
<feature type="binding site" evidence="2">
    <location>
        <position position="1084"/>
    </location>
    <ligand>
        <name>NADP(+)</name>
        <dbReference type="ChEBI" id="CHEBI:58349"/>
    </ligand>
</feature>
<feature type="modified residue" description="Phosphotyrosine" evidence="5">
    <location>
        <position position="569"/>
    </location>
</feature>
<feature type="sequence variant" description="In strain: NOD/LtJ." evidence="9">
    <original>C</original>
    <variation>R</variation>
    <location>
        <position position="211"/>
    </location>
</feature>
<feature type="sequence variant" description="In strain: SJL/J." evidence="9">
    <original>P</original>
    <variation>L</variation>
    <location>
        <position position="967"/>
    </location>
</feature>
<feature type="sequence variant" description="In strain: BALB/CBYJ." evidence="9">
    <original>S</original>
    <variation>F</variation>
    <location>
        <position position="968"/>
    </location>
</feature>
<feature type="mutagenesis site" description="Reduced interaction with SPSB2." evidence="16">
    <original>K</original>
    <variation>A</variation>
    <location>
        <position position="22"/>
    </location>
</feature>
<feature type="mutagenesis site" description="Significant loss of interaction with SPSB2." evidence="16">
    <original>D</original>
    <variation>A</variation>
    <location>
        <position position="23"/>
    </location>
</feature>
<feature type="mutagenesis site" description="Significant loss of interaction with SPSB2." evidence="16">
    <original>N</original>
    <variation>A</variation>
    <variation>Q</variation>
    <location>
        <position position="25"/>
    </location>
</feature>
<feature type="mutagenesis site" description="Loss of interaction with SPSB2." evidence="16">
    <original>N</original>
    <variation>A</variation>
    <variation>Q</variation>
    <location>
        <position position="27"/>
    </location>
</feature>
<feature type="mutagenesis site" description="Reduced interaction with SPSB2." evidence="16">
    <original>V</original>
    <variation>A</variation>
    <location>
        <position position="28"/>
    </location>
</feature>
<feature type="mutagenesis site" description="Reduced interaction with SPSB2." evidence="16">
    <original>K</original>
    <variation>A</variation>
    <location>
        <position position="30"/>
    </location>
</feature>
<feature type="sequence conflict" description="In Ref. 4; AAC52356." evidence="24" ref="4">
    <original>K</original>
    <variation>T</variation>
    <location>
        <position position="19"/>
    </location>
</feature>
<feature type="sequence conflict" description="In Ref. 7; AAM11887 and 9; AAH62378." evidence="24" ref="7 9">
    <original>T</original>
    <variation>TP</variation>
    <location>
        <position position="72"/>
    </location>
</feature>
<feature type="sequence conflict" description="In Ref. 2; M92649." evidence="24" ref="2">
    <original>A</original>
    <variation>V</variation>
    <location>
        <position position="191"/>
    </location>
</feature>
<feature type="sequence conflict" description="In Ref. 7; AAM11887 and 9; AAH62378." evidence="24" ref="7 9">
    <original>S</original>
    <variation>T</variation>
    <location>
        <position position="245"/>
    </location>
</feature>
<feature type="sequence conflict" description="In Ref. 2; M92649." evidence="24" ref="2">
    <original>A</original>
    <variation>G</variation>
    <location>
        <position position="844"/>
    </location>
</feature>
<feature type="sequence conflict" description="In Ref. 9; AAH62378." evidence="24" ref="9">
    <original>I</original>
    <variation>V</variation>
    <location>
        <position position="1075"/>
    </location>
</feature>
<feature type="strand" evidence="50">
    <location>
        <begin position="79"/>
        <end position="83"/>
    </location>
</feature>
<feature type="turn" evidence="50">
    <location>
        <begin position="84"/>
        <end position="86"/>
    </location>
</feature>
<feature type="strand" evidence="50">
    <location>
        <begin position="89"/>
        <end position="92"/>
    </location>
</feature>
<feature type="helix" evidence="50">
    <location>
        <begin position="94"/>
        <end position="97"/>
    </location>
</feature>
<feature type="strand" evidence="45">
    <location>
        <begin position="103"/>
        <end position="107"/>
    </location>
</feature>
<feature type="helix" evidence="50">
    <location>
        <begin position="117"/>
        <end position="119"/>
    </location>
</feature>
<feature type="helix" evidence="49">
    <location>
        <begin position="130"/>
        <end position="146"/>
    </location>
</feature>
<feature type="turn" evidence="49">
    <location>
        <begin position="147"/>
        <end position="150"/>
    </location>
</feature>
<feature type="helix" evidence="49">
    <location>
        <begin position="153"/>
        <end position="170"/>
    </location>
</feature>
<feature type="helix" evidence="49">
    <location>
        <begin position="177"/>
        <end position="189"/>
    </location>
</feature>
<feature type="helix" evidence="49">
    <location>
        <begin position="195"/>
        <end position="199"/>
    </location>
</feature>
<feature type="strand" evidence="49">
    <location>
        <begin position="204"/>
        <end position="207"/>
    </location>
</feature>
<feature type="helix" evidence="46">
    <location>
        <begin position="208"/>
        <end position="210"/>
    </location>
</feature>
<feature type="helix" evidence="49">
    <location>
        <begin position="214"/>
        <end position="229"/>
    </location>
</feature>
<feature type="helix" evidence="49">
    <location>
        <begin position="230"/>
        <end position="232"/>
    </location>
</feature>
<feature type="strand" evidence="49">
    <location>
        <begin position="237"/>
        <end position="240"/>
    </location>
</feature>
<feature type="strand" evidence="49">
    <location>
        <begin position="245"/>
        <end position="249"/>
    </location>
</feature>
<feature type="strand" evidence="49">
    <location>
        <begin position="255"/>
        <end position="259"/>
    </location>
</feature>
<feature type="strand" evidence="48">
    <location>
        <begin position="263"/>
        <end position="265"/>
    </location>
</feature>
<feature type="strand" evidence="46">
    <location>
        <begin position="267"/>
        <end position="269"/>
    </location>
</feature>
<feature type="strand" evidence="48">
    <location>
        <begin position="271"/>
        <end position="273"/>
    </location>
</feature>
<feature type="helix" evidence="49">
    <location>
        <begin position="275"/>
        <end position="277"/>
    </location>
</feature>
<feature type="helix" evidence="49">
    <location>
        <begin position="278"/>
        <end position="286"/>
    </location>
</feature>
<feature type="strand" evidence="44">
    <location>
        <begin position="294"/>
        <end position="296"/>
    </location>
</feature>
<feature type="strand" evidence="49">
    <location>
        <begin position="301"/>
        <end position="304"/>
    </location>
</feature>
<feature type="strand" evidence="49">
    <location>
        <begin position="311"/>
        <end position="313"/>
    </location>
</feature>
<feature type="helix" evidence="49">
    <location>
        <begin position="317"/>
        <end position="319"/>
    </location>
</feature>
<feature type="strand" evidence="49">
    <location>
        <begin position="322"/>
        <end position="324"/>
    </location>
</feature>
<feature type="helix" evidence="47">
    <location>
        <begin position="332"/>
        <end position="334"/>
    </location>
</feature>
<feature type="turn" evidence="47">
    <location>
        <begin position="335"/>
        <end position="337"/>
    </location>
</feature>
<feature type="strand" evidence="49">
    <location>
        <begin position="339"/>
        <end position="342"/>
    </location>
</feature>
<feature type="strand" evidence="49">
    <location>
        <begin position="350"/>
        <end position="353"/>
    </location>
</feature>
<feature type="strand" evidence="49">
    <location>
        <begin position="356"/>
        <end position="359"/>
    </location>
</feature>
<feature type="helix" evidence="50">
    <location>
        <begin position="369"/>
        <end position="373"/>
    </location>
</feature>
<feature type="helix" evidence="50">
    <location>
        <begin position="375"/>
        <end position="378"/>
    </location>
</feature>
<feature type="turn" evidence="50">
    <location>
        <begin position="380"/>
        <end position="383"/>
    </location>
</feature>
<feature type="helix" evidence="50">
    <location>
        <begin position="386"/>
        <end position="392"/>
    </location>
</feature>
<feature type="helix" evidence="50">
    <location>
        <begin position="400"/>
        <end position="402"/>
    </location>
</feature>
<feature type="helix" evidence="49">
    <location>
        <begin position="415"/>
        <end position="422"/>
    </location>
</feature>
<feature type="helix" evidence="49">
    <location>
        <begin position="430"/>
        <end position="442"/>
    </location>
</feature>
<feature type="helix" evidence="50">
    <location>
        <begin position="455"/>
        <end position="458"/>
    </location>
</feature>
<feature type="strand" evidence="50">
    <location>
        <begin position="461"/>
        <end position="463"/>
    </location>
</feature>
<feature type="helix" evidence="50">
    <location>
        <begin position="464"/>
        <end position="466"/>
    </location>
</feature>
<feature type="helix" evidence="50">
    <location>
        <begin position="468"/>
        <end position="471"/>
    </location>
</feature>
<feature type="strand" evidence="49">
    <location>
        <begin position="480"/>
        <end position="485"/>
    </location>
</feature>
<feature type="helix" evidence="49">
    <location>
        <begin position="489"/>
        <end position="492"/>
    </location>
</feature>
<feature type="helix" evidence="51">
    <location>
        <begin position="509"/>
        <end position="517"/>
    </location>
</feature>
<reference key="1">
    <citation type="journal article" date="1992" name="Science">
        <title>Cloning and characterization of inducible nitric oxide synthase from mouse macrophages.</title>
        <authorList>
            <person name="Xie Q.-W."/>
            <person name="Cho H.J."/>
            <person name="Calaycay J."/>
            <person name="Mumford R.A."/>
            <person name="Swiderek K.M."/>
            <person name="Lee T.D."/>
            <person name="Ding A."/>
            <person name="Troso T."/>
            <person name="Nathan C."/>
        </authorList>
    </citation>
    <scope>NUCLEOTIDE SEQUENCE [MRNA]</scope>
</reference>
<reference key="2">
    <citation type="journal article" date="1992" name="Proc. Natl. Acad. Sci. U.S.A.">
        <title>Cloned and expressed macrophage nitric oxide synthase contrasts with the brain enzyme.</title>
        <authorList>
            <person name="Lowenstein C.J."/>
            <person name="Glatt C.S."/>
            <person name="Bredt D.S."/>
            <person name="Snyder S.H."/>
        </authorList>
    </citation>
    <scope>NUCLEOTIDE SEQUENCE [MRNA]</scope>
</reference>
<reference key="3">
    <citation type="journal article" date="1992" name="J. Biol. Chem.">
        <title>Molecular cloning and functional expression of an inducible nitric oxide synthase from a murine macrophage cell line.</title>
        <authorList>
            <person name="Lyons C.R."/>
            <person name="Orloff G.J."/>
            <person name="Cunningham J.M."/>
        </authorList>
    </citation>
    <scope>NUCLEOTIDE SEQUENCE [MRNA]</scope>
</reference>
<reference key="4">
    <citation type="journal article" date="1995" name="Am. J. Physiol.">
        <title>Role of NF-kappa B in the regulation of inducible nitric oxide synthase in an MTAL cell line.</title>
        <authorList>
            <person name="Kone B.C."/>
            <person name="Schwoebel J."/>
            <person name="Turner P."/>
            <person name="Mohaupt M.G."/>
            <person name="Cangro C.B."/>
        </authorList>
    </citation>
    <scope>NUCLEOTIDE SEQUENCE [MRNA]</scope>
    <scope>FUNCTION</scope>
</reference>
<reference key="5">
    <citation type="journal article" date="1999" name="J. Immunol.">
        <title>Sequence polymorphisms in the chemokines Scya1 (TCA-3), Scya2 (monocyte chemoattractant protein (MCP)-1), and Scya12 (MCP-5) are candidates for eae7, a locus controlling susceptibility to monophasic remitting/nonrelapsing experimental allergic encephalomyelitis.</title>
        <authorList>
            <person name="Teuscher C."/>
            <person name="Butterfield R.J."/>
            <person name="Ma R.Z."/>
            <person name="Zachary J.F."/>
            <person name="Doerge R.W."/>
            <person name="Blankenhorn E.P."/>
        </authorList>
    </citation>
    <scope>NUCLEOTIDE SEQUENCE [MRNA]</scope>
    <scope>VARIANTS ARG-211; LEU-967 AND PHE-968</scope>
    <source>
        <strain>B10.S/J</strain>
        <strain>BALB/cByJ</strain>
        <strain>DBA/2J</strain>
        <strain>NOD/LtJ</strain>
        <strain>SJL/J</strain>
        <tissue>Spleen</tissue>
    </source>
</reference>
<reference key="6">
    <citation type="submission" date="2001-10" db="EMBL/GenBank/DDBJ databases">
        <title>Genomic structure of the murine inducible nitric oxide synthase (i-NOS) gene.</title>
        <authorList>
            <person name="Coge F."/>
            <person name="Levacher B."/>
            <person name="Rique H."/>
            <person name="Leopold O."/>
            <person name="Boutin J.A."/>
            <person name="Galizzi J.-P."/>
        </authorList>
    </citation>
    <scope>NUCLEOTIDE SEQUENCE [GENOMIC DNA]</scope>
    <source>
        <strain>CD-1</strain>
    </source>
</reference>
<reference key="7">
    <citation type="submission" date="2002-03" db="EMBL/GenBank/DDBJ databases">
        <title>Mouse inducible nitric oxide synthase mRNA.</title>
        <authorList>
            <person name="Hagiwara K."/>
            <person name="Endo Y."/>
            <person name="Xin H."/>
            <person name="Takahashi M."/>
            <person name="Huqun X."/>
            <person name="Nukiwa T."/>
        </authorList>
    </citation>
    <scope>NUCLEOTIDE SEQUENCE [MRNA]</scope>
    <source>
        <strain>ICR</strain>
    </source>
</reference>
<reference key="8">
    <citation type="journal article" date="2009" name="PLoS Biol.">
        <title>Lineage-specific biology revealed by a finished genome assembly of the mouse.</title>
        <authorList>
            <person name="Church D.M."/>
            <person name="Goodstadt L."/>
            <person name="Hillier L.W."/>
            <person name="Zody M.C."/>
            <person name="Goldstein S."/>
            <person name="She X."/>
            <person name="Bult C.J."/>
            <person name="Agarwala R."/>
            <person name="Cherry J.L."/>
            <person name="DiCuccio M."/>
            <person name="Hlavina W."/>
            <person name="Kapustin Y."/>
            <person name="Meric P."/>
            <person name="Maglott D."/>
            <person name="Birtle Z."/>
            <person name="Marques A.C."/>
            <person name="Graves T."/>
            <person name="Zhou S."/>
            <person name="Teague B."/>
            <person name="Potamousis K."/>
            <person name="Churas C."/>
            <person name="Place M."/>
            <person name="Herschleb J."/>
            <person name="Runnheim R."/>
            <person name="Forrest D."/>
            <person name="Amos-Landgraf J."/>
            <person name="Schwartz D.C."/>
            <person name="Cheng Z."/>
            <person name="Lindblad-Toh K."/>
            <person name="Eichler E.E."/>
            <person name="Ponting C.P."/>
        </authorList>
    </citation>
    <scope>NUCLEOTIDE SEQUENCE [LARGE SCALE GENOMIC DNA]</scope>
    <source>
        <strain>C57BL/6J</strain>
    </source>
</reference>
<reference key="9">
    <citation type="journal article" date="2004" name="Genome Res.">
        <title>The status, quality, and expansion of the NIH full-length cDNA project: the Mammalian Gene Collection (MGC).</title>
        <authorList>
            <consortium name="The MGC Project Team"/>
        </authorList>
    </citation>
    <scope>NUCLEOTIDE SEQUENCE [LARGE SCALE MRNA]</scope>
    <source>
        <strain>NMRI</strain>
        <tissue>Mammary tumor</tissue>
    </source>
</reference>
<reference key="10">
    <citation type="submission" date="2009-01" db="UniProtKB">
        <authorList>
            <person name="Lubec G."/>
            <person name="Sunyer B."/>
            <person name="Chen W.-Q."/>
        </authorList>
    </citation>
    <scope>PROTEIN SEQUENCE OF 733-744</scope>
    <scope>IDENTIFICATION BY MASS SPECTROMETRY</scope>
    <source>
        <strain>OF1</strain>
        <tissue>Hippocampus</tissue>
    </source>
</reference>
<reference key="11">
    <citation type="journal article" date="1995" name="Proc. Natl. Acad. Sci. U.S.A.">
        <title>The mode of action of aspirin-like drugs: effect on inducible nitric oxide synthase.</title>
        <authorList>
            <person name="Amin A.R."/>
            <person name="Vyas P."/>
            <person name="Attur M."/>
            <person name="Leszczynska-Piziak J."/>
            <person name="Patel I.R."/>
            <person name="Weissmann G."/>
            <person name="Abramson S.B."/>
        </authorList>
    </citation>
    <scope>EFFECT OF ASPIRIN</scope>
    <source>
        <tissue>Macrophage</tissue>
    </source>
</reference>
<reference key="12">
    <citation type="journal article" date="2005" name="Science">
        <title>Inducible nitric oxide synthase binds, S-nitrosylates, and activates cyclooxygenase-2.</title>
        <authorList>
            <person name="Kim S.F."/>
            <person name="Huri D.A."/>
            <person name="Snyder S.H."/>
        </authorList>
    </citation>
    <scope>FUNCTION AS NITROSYLASE</scope>
</reference>
<reference key="13">
    <citation type="journal article" date="2009" name="Immunity">
        <title>The phagosomal proteome in interferon-gamma-activated macrophages.</title>
        <authorList>
            <person name="Trost M."/>
            <person name="English L."/>
            <person name="Lemieux S."/>
            <person name="Courcelles M."/>
            <person name="Desjardins M."/>
            <person name="Thibault P."/>
        </authorList>
    </citation>
    <scope>IDENTIFICATION BY MASS SPECTROMETRY [LARGE SCALE ANALYSIS]</scope>
</reference>
<reference key="14">
    <citation type="journal article" date="2010" name="J. Cell Biol.">
        <title>The SPRY domain-containing SOCS box protein SPSB2 targets iNOS for proteasomal degradation.</title>
        <authorList>
            <person name="Kuang Z."/>
            <person name="Lewis R.S."/>
            <person name="Curtis J.M."/>
            <person name="Zhan Y."/>
            <person name="Saunders B.M."/>
            <person name="Babon J.J."/>
            <person name="Kolesnik T.B."/>
            <person name="Low A."/>
            <person name="Masters S.L."/>
            <person name="Willson T.A."/>
            <person name="Kedzierski L."/>
            <person name="Yao S."/>
            <person name="Handman E."/>
            <person name="Norton R.S."/>
            <person name="Nicholson S.E."/>
        </authorList>
    </citation>
    <scope>POLYUBIQUITINATION</scope>
    <scope>PROTEASOMAL DEGRADATION</scope>
    <scope>INTERACTION WITH SPSB1; SPSB2 AND SPSB4</scope>
    <scope>MOTIF DINNN</scope>
    <scope>MUTAGENESIS OF LYS-22; ASP-23; ASN-25; ASN-27; VAL-28 AND LYS-30</scope>
</reference>
<reference key="15">
    <citation type="journal article" date="2011" name="J. Biol. Chem.">
        <title>Regulation of inducible nitric-oxide synthase by the SPRY domain- and SOCS box-containing proteins.</title>
        <authorList>
            <person name="Nishiya T."/>
            <person name="Matsumoto K."/>
            <person name="Maekawa S."/>
            <person name="Kajita E."/>
            <person name="Horinouchi T."/>
            <person name="Fujimuro M."/>
            <person name="Ogasawara K."/>
            <person name="Uehara T."/>
            <person name="Miwa S."/>
        </authorList>
    </citation>
    <scope>POLYUBIQUITINATION</scope>
    <scope>PROTEASOMAL DEGRADATION</scope>
</reference>
<reference key="16">
    <citation type="journal article" date="2011" name="Nat. Med.">
        <title>Requirement of argininosuccinate lyase for systemic nitric oxide production.</title>
        <authorList>
            <person name="Erez A."/>
            <person name="Nagamani S.C."/>
            <person name="Shchelochkov O.A."/>
            <person name="Premkumar M.H."/>
            <person name="Campeau P.M."/>
            <person name="Chen Y."/>
            <person name="Garg H.K."/>
            <person name="Li L."/>
            <person name="Mian A."/>
            <person name="Bertin T.K."/>
            <person name="Black J.O."/>
            <person name="Zeng H."/>
            <person name="Tang Y."/>
            <person name="Reddy A.K."/>
            <person name="Summar M."/>
            <person name="O'Brien W.E."/>
            <person name="Harrison D.G."/>
            <person name="Mitch W.E."/>
            <person name="Marini J.C."/>
            <person name="Aschner J.L."/>
            <person name="Bryan N.S."/>
            <person name="Lee B."/>
        </authorList>
    </citation>
    <scope>INTERACTION WITH ASL; ASS1 AND HSP90AA1</scope>
</reference>
<reference key="17">
    <citation type="journal article" date="2011" name="PLoS ONE">
        <title>The circadian deadenylase Nocturnin is necessary for stabilization of the iNOS mRNA in mice.</title>
        <authorList>
            <person name="Niu S."/>
            <person name="Shingle D.L."/>
            <person name="Garbarino-Pico E."/>
            <person name="Kojima S."/>
            <person name="Gilbert M."/>
            <person name="Green C.B."/>
        </authorList>
    </citation>
    <scope>INDUCTION BY LIPOPOLYSACCHARIDES AND CIRCADIAN RHYTHM</scope>
</reference>
<reference key="18">
    <citation type="journal article" date="2014" name="J. Innate Immun.">
        <title>The transcription factor nuclear factor of activated T cells c3 modulates the function of macrophages in sepsis.</title>
        <authorList>
            <person name="Ranjan R."/>
            <person name="Deng J."/>
            <person name="Chung S."/>
            <person name="Lee Y.G."/>
            <person name="Park G.Y."/>
            <person name="Xiao L."/>
            <person name="Joo M."/>
            <person name="Christman J.W."/>
            <person name="Karpurapu M."/>
        </authorList>
    </citation>
    <scope>INDUCTION BY LIPOPOLYSACCHARIDES</scope>
</reference>
<reference evidence="37 39 42" key="19">
    <citation type="journal article" date="1997" name="Science">
        <title>The structure of nitric oxide synthase oxygenase domain and inhibitor complexes.</title>
        <authorList>
            <person name="Crane B.R."/>
            <person name="Arvai A.S."/>
            <person name="Gachhui R."/>
            <person name="Wu C."/>
            <person name="Ghosh D.K."/>
            <person name="Getzoff E.D."/>
            <person name="Stuehr D.J."/>
            <person name="Tainer J.A."/>
        </authorList>
    </citation>
    <scope>X-RAY CRYSTALLOGRAPHY (2.6 ANGSTROMS) OF 116-496</scope>
</reference>
<reference evidence="38 41 43" key="20">
    <citation type="journal article" date="1998" name="Science">
        <title>Structure of nitric oxide synthase oxygenase dimer with pterin and substrate.</title>
        <authorList>
            <person name="Crane B.R."/>
            <person name="Arvai A.S."/>
            <person name="Ghosh D.K."/>
            <person name="Wu C."/>
            <person name="Getzoff E.D."/>
            <person name="Stuehr D.J."/>
            <person name="Tainer J.A."/>
        </authorList>
    </citation>
    <scope>X-RAY CRYSTALLOGRAPHY (2.6 ANGSTROMS) OF 77-496 IN COMPLEX WITH (6R)-L-ERYTHRO-5,6,7,8-TETRAHYDROBIOPTERIN AND HEME B</scope>
</reference>
<reference key="21">
    <citation type="journal article" date="1999" name="EMBO J.">
        <title>Inducible nitric oxide synthase: role of the N-terminal beta-hairpin hook and pterin-binding segment in dimerization and tetrahydrobiopterin interaction.</title>
        <authorList>
            <person name="Ghosh D.K."/>
            <person name="Crane B.R."/>
            <person name="Ghosh S."/>
            <person name="Wolan D."/>
            <person name="Gachhui R."/>
            <person name="Crooks C."/>
            <person name="Presta A."/>
            <person name="Tainer J.A."/>
            <person name="Getzoff E.D."/>
            <person name="Stuehr D.J."/>
        </authorList>
    </citation>
    <scope>X-RAY CRYSTALLOGRAPHY (2.35 ANGSTROMS) OF 77-496</scope>
</reference>
<reference evidence="25 40" key="22">
    <citation type="journal article" date="1999" name="EMBO J.">
        <title>N-terminal domain swapping and metal ion binding in nitric oxide synthase dimerization.</title>
        <authorList>
            <person name="Crane B.R."/>
            <person name="Rosenfeld R.J."/>
            <person name="Arvai A.S."/>
            <person name="Ghosh D.K."/>
            <person name="Ghosh S."/>
            <person name="Tainer J.A."/>
            <person name="Stuehr D.J."/>
            <person name="Getzoff E.D."/>
        </authorList>
    </citation>
    <scope>X-RAY CRYSTALLOGRAPHY (2.35 ANGSTROMS) OF 77-499 IN COMPLEX WITH (6R)-L-ERYTHRO-5,6,7,8-TETRAHYDROBIOPTERIN; ZINC AND HEME B</scope>
</reference>
<reference evidence="26 27 28" key="23">
    <citation type="journal article" date="2000" name="Biochemistry">
        <title>Structures of the N(omega)-hydroxy-L-arginine complex of inducible nitric oxide synthase oxygenase dimer with active and inactive pterins.</title>
        <authorList>
            <person name="Crane B.R."/>
            <person name="Arvai A.S."/>
            <person name="Ghosh S."/>
            <person name="Getzoff E.D."/>
            <person name="Stuehr D.J."/>
            <person name="Tainer J.A."/>
        </authorList>
    </citation>
    <scope>X-RAY CRYSTALLOGRAPHY (2.35 ANGSTROMS) OF 77-496 IN COMPLEX WITH (6R)-L-ERYTHRO-5,6,7,8-TETRAHYDROBIOPTERIN; ZINC AND HEME B</scope>
    <scope>SUBUNIT</scope>
</reference>
<reference evidence="29 30" key="24">
    <citation type="journal article" date="2001" name="Biochemistry">
        <title>Structures of tetrahydrobiopterin binding-site mutants of inducible nitric oxide synthase oxygenase dimer and implicated roles of Trp457.</title>
        <authorList>
            <person name="Aoyagi M."/>
            <person name="Arvai A.S."/>
            <person name="Ghosh S."/>
            <person name="Stuehr D.J."/>
            <person name="Tainer J.A."/>
            <person name="Getzoff E.D."/>
        </authorList>
    </citation>
    <scope>X-RAY CRYSTALLOGRAPHY (2.3 ANGSTROMS) OF TRP-457 MUTANT IN COMPLEX WITH (6R)-L-ERYTHRO-5,6,7,8-TETRAHYDROBIOPTERIN</scope>
    <scope>SUBUNIT</scope>
</reference>
<reference evidence="31 32 33 34 35" key="25">
    <citation type="journal article" date="2002" name="Biochemistry">
        <title>Conformational changes in nitric oxide synthases induced by chlorzoxazone and nitroindazoles: crystallographic and computational analyses of inhibitor potency.</title>
        <authorList>
            <person name="Rosenfeld R.J."/>
            <person name="Garcin E.D."/>
            <person name="Panda K."/>
            <person name="Andersson G."/>
            <person name="Aberg A."/>
            <person name="Wallace A.V."/>
            <person name="Morris G.M."/>
            <person name="Olson A.J."/>
            <person name="Stuehr D.J."/>
            <person name="Tainer J.A."/>
            <person name="Getzoff E.D."/>
        </authorList>
    </citation>
    <scope>X-RAY CRYSTALLOGRAPHY (2.35 ANGSTROMS) OF 77-496 IN COMPLEX WITH (6R)-L-ERYTHRO-5,6,7,8-TETRAHYDROBIOPTERIN AND HEME B</scope>
</reference>
<reference evidence="36" key="26">
    <citation type="journal article" date="2003" name="Arch. Biochem. Biophys.">
        <title>Crystal structures of cyanide complexes of P450cam and the oxygenase domain of inducible nitric oxide synthase -- structural models of the short-lived oxygen complexes.</title>
        <authorList>
            <person name="Fedorov R."/>
            <person name="Ghosh D.K."/>
            <person name="Schlichting I."/>
        </authorList>
    </citation>
    <scope>X-RAY CRYSTALLOGRAPHY (2.4 ANGSTROMS) OF 77-495 IN COMPLEX WITH (6R)-L-ERYTHRO-5,6,7,8-TETRAHYDROBIOPTERIN; ZINC AND HEME B</scope>
</reference>
<accession>P29477</accession>
<accession>O70515</accession>
<accession>O70516</accession>
<accession>Q5SXT3</accession>
<accession>Q6P6A0</accession>
<accession>Q8R410</accession>
<proteinExistence type="evidence at protein level"/>
<keyword id="KW-0002">3D-structure</keyword>
<keyword id="KW-0112">Calmodulin-binding</keyword>
<keyword id="KW-0963">Cytoplasm</keyword>
<keyword id="KW-0903">Direct protein sequencing</keyword>
<keyword id="KW-0274">FAD</keyword>
<keyword id="KW-0285">Flavoprotein</keyword>
<keyword id="KW-0288">FMN</keyword>
<keyword id="KW-0349">Heme</keyword>
<keyword id="KW-0408">Iron</keyword>
<keyword id="KW-0479">Metal-binding</keyword>
<keyword id="KW-0521">NADP</keyword>
<keyword id="KW-0560">Oxidoreductase</keyword>
<keyword id="KW-0597">Phosphoprotein</keyword>
<keyword id="KW-1185">Reference proteome</keyword>
<keyword id="KW-0832">Ubl conjugation</keyword>
<keyword id="KW-0862">Zinc</keyword>
<evidence type="ECO:0000250" key="1">
    <source>
        <dbReference type="UniProtKB" id="P29474"/>
    </source>
</evidence>
<evidence type="ECO:0000250" key="2">
    <source>
        <dbReference type="UniProtKB" id="P29476"/>
    </source>
</evidence>
<evidence type="ECO:0000250" key="3">
    <source>
        <dbReference type="UniProtKB" id="P35228"/>
    </source>
</evidence>
<evidence type="ECO:0000250" key="4">
    <source>
        <dbReference type="UniProtKB" id="P79290"/>
    </source>
</evidence>
<evidence type="ECO:0000250" key="5">
    <source>
        <dbReference type="UniProtKB" id="Q06518"/>
    </source>
</evidence>
<evidence type="ECO:0000255" key="6">
    <source>
        <dbReference type="PROSITE-ProRule" id="PRU00088"/>
    </source>
</evidence>
<evidence type="ECO:0000255" key="7">
    <source>
        <dbReference type="PROSITE-ProRule" id="PRU00716"/>
    </source>
</evidence>
<evidence type="ECO:0000256" key="8">
    <source>
        <dbReference type="SAM" id="MobiDB-lite"/>
    </source>
</evidence>
<evidence type="ECO:0000269" key="9">
    <source>
    </source>
</evidence>
<evidence type="ECO:0000269" key="10">
    <source>
    </source>
</evidence>
<evidence type="ECO:0000269" key="11">
    <source>
    </source>
</evidence>
<evidence type="ECO:0000269" key="12">
    <source>
    </source>
</evidence>
<evidence type="ECO:0000269" key="13">
    <source>
    </source>
</evidence>
<evidence type="ECO:0000269" key="14">
    <source>
    </source>
</evidence>
<evidence type="ECO:0000269" key="15">
    <source>
    </source>
</evidence>
<evidence type="ECO:0000269" key="16">
    <source>
    </source>
</evidence>
<evidence type="ECO:0000269" key="17">
    <source>
    </source>
</evidence>
<evidence type="ECO:0000269" key="18">
    <source>
    </source>
</evidence>
<evidence type="ECO:0000269" key="19">
    <source>
    </source>
</evidence>
<evidence type="ECO:0000269" key="20">
    <source>
    </source>
</evidence>
<evidence type="ECO:0000269" key="21">
    <source>
    </source>
</evidence>
<evidence type="ECO:0000269" key="22">
    <source>
    </source>
</evidence>
<evidence type="ECO:0000269" key="23">
    <source>
    </source>
</evidence>
<evidence type="ECO:0000305" key="24"/>
<evidence type="ECO:0007744" key="25">
    <source>
        <dbReference type="PDB" id="1DF1"/>
    </source>
</evidence>
<evidence type="ECO:0007744" key="26">
    <source>
        <dbReference type="PDB" id="1DWV"/>
    </source>
</evidence>
<evidence type="ECO:0007744" key="27">
    <source>
        <dbReference type="PDB" id="1DWW"/>
    </source>
</evidence>
<evidence type="ECO:0007744" key="28">
    <source>
        <dbReference type="PDB" id="1DWX"/>
    </source>
</evidence>
<evidence type="ECO:0007744" key="29">
    <source>
        <dbReference type="PDB" id="1JWJ"/>
    </source>
</evidence>
<evidence type="ECO:0007744" key="30">
    <source>
        <dbReference type="PDB" id="1JWK"/>
    </source>
</evidence>
<evidence type="ECO:0007744" key="31">
    <source>
        <dbReference type="PDB" id="1M8D"/>
    </source>
</evidence>
<evidence type="ECO:0007744" key="32">
    <source>
        <dbReference type="PDB" id="1M8E"/>
    </source>
</evidence>
<evidence type="ECO:0007744" key="33">
    <source>
        <dbReference type="PDB" id="1M8H"/>
    </source>
</evidence>
<evidence type="ECO:0007744" key="34">
    <source>
        <dbReference type="PDB" id="1M8I"/>
    </source>
</evidence>
<evidence type="ECO:0007744" key="35">
    <source>
        <dbReference type="PDB" id="1M9T"/>
    </source>
</evidence>
<evidence type="ECO:0007744" key="36">
    <source>
        <dbReference type="PDB" id="1N2N"/>
    </source>
</evidence>
<evidence type="ECO:0007744" key="37">
    <source>
        <dbReference type="PDB" id="1NOC"/>
    </source>
</evidence>
<evidence type="ECO:0007744" key="38">
    <source>
        <dbReference type="PDB" id="1NOD"/>
    </source>
</evidence>
<evidence type="ECO:0007744" key="39">
    <source>
        <dbReference type="PDB" id="1NOS"/>
    </source>
</evidence>
<evidence type="ECO:0007744" key="40">
    <source>
        <dbReference type="PDB" id="1QOM"/>
    </source>
</evidence>
<evidence type="ECO:0007744" key="41">
    <source>
        <dbReference type="PDB" id="2NOD"/>
    </source>
</evidence>
<evidence type="ECO:0007744" key="42">
    <source>
        <dbReference type="PDB" id="2NOS"/>
    </source>
</evidence>
<evidence type="ECO:0007744" key="43">
    <source>
        <dbReference type="PDB" id="3NOD"/>
    </source>
</evidence>
<evidence type="ECO:0007829" key="44">
    <source>
        <dbReference type="PDB" id="1DF1"/>
    </source>
</evidence>
<evidence type="ECO:0007829" key="45">
    <source>
        <dbReference type="PDB" id="1QOM"/>
    </source>
</evidence>
<evidence type="ECO:0007829" key="46">
    <source>
        <dbReference type="PDB" id="2BHJ"/>
    </source>
</evidence>
<evidence type="ECO:0007829" key="47">
    <source>
        <dbReference type="PDB" id="2ORO"/>
    </source>
</evidence>
<evidence type="ECO:0007829" key="48">
    <source>
        <dbReference type="PDB" id="2ORP"/>
    </source>
</evidence>
<evidence type="ECO:0007829" key="49">
    <source>
        <dbReference type="PDB" id="2ORT"/>
    </source>
</evidence>
<evidence type="ECO:0007829" key="50">
    <source>
        <dbReference type="PDB" id="3E7M"/>
    </source>
</evidence>
<evidence type="ECO:0007829" key="51">
    <source>
        <dbReference type="PDB" id="3GOF"/>
    </source>
</evidence>
<sequence>MACPWKFLFKVKSYQSDLKEEKDINNNVKKTPCAVLSPTIQDDPKSHQNGSPQLLTGTAQNVPESLDKLHVTSTRPQYVRIKNWGSGEILHDTLHHKATSDFTCKSKSCLGSIMNPKSLTRGPRDKPTPLEELLPHAIEFINQYYGSFKEAKIEEHLARLEAVTKEIETTGTYQLTLDELIFATKMAWRNAPRCIGRIQWSNLQVFDARNCSTAQEMFQHICRHILYATNNGNIRSAITVFPQRSDGKHDFRLWNSQLIRYAGYQMPDGTIRGDAATLEFTQLCIDLGWKPRYGRFDVLPLVLQADGQDPEVFEIPPDLVLEVTMEHPKYEWFQELGLKWYALPAVANMLLEVGGLEFPACPFNGWYMGTEIGVRDFCDTQRYNILEEVGRRMGLETHTLASLWKDRAVTEINVAVLHSFQKQNVTIMDHHTASESFMKHMQNEYRARGGCPADWIWLVPPVSGSITPVFHQEMLNYVLSPFYYYQIEPWKTHIWQNEKLRPRRREIRFRVLVKVVFFASMLMRKVMASRVRATVLFATETGKSEALARDLATLFSYAFNTKVVCMDQYKASTLEEEQLLLVVTSTFGNGDCPSNGQTLKKSLFMLRELNHTFRYAVFGLGSSMYPQFCAFAHDIDQKLSHLGASQLAPTGEGDELSGQEDAFRSWAVQTFRAACETFDVRSKHHIQIPKRFTSNATWEPQQYRLIQSPEPLDLNRALSSIHAKNVFTMRLKSQQNLQSEKSSRTTLLVQLTFEGSRGPSYLPGEHLGIFPGNQTALVQGILERVVDCPTPHQTVCLEVLDESGSYWVKDKRLPPCSLSQALTYFLDITTPPTQLQLHKLARFATDETDRQRLEALCQPSEYNDWKFSNNPTFLEVLEEFPSLHVPAAFLLSQLPILKPRYYSISSSQDHTPSEVHLTVAVVTYRTRDGQGPLHHGVCSTWIRNLKPQDPVPCFVRSVSGFQLPEDPSQPCILIGPGTGIAPFRSFWQQRLHDSQHKGLKGGRMSLVFGCRHPEEDHLYQEEMQEMVRKRVLFQVHTGYSRLPGKPKVYVQDILQKQLANEVLSVLHGEQGHLYICGDVRMARDVATTLKKLVATKLNLSEEQVEDYFFQLKSQKRYHEDIFGAVFSYGAKKGSALEEPKATRL</sequence>
<organism>
    <name type="scientific">Mus musculus</name>
    <name type="common">Mouse</name>
    <dbReference type="NCBI Taxonomy" id="10090"/>
    <lineage>
        <taxon>Eukaryota</taxon>
        <taxon>Metazoa</taxon>
        <taxon>Chordata</taxon>
        <taxon>Craniata</taxon>
        <taxon>Vertebrata</taxon>
        <taxon>Euteleostomi</taxon>
        <taxon>Mammalia</taxon>
        <taxon>Eutheria</taxon>
        <taxon>Euarchontoglires</taxon>
        <taxon>Glires</taxon>
        <taxon>Rodentia</taxon>
        <taxon>Myomorpha</taxon>
        <taxon>Muroidea</taxon>
        <taxon>Muridae</taxon>
        <taxon>Murinae</taxon>
        <taxon>Mus</taxon>
        <taxon>Mus</taxon>
    </lineage>
</organism>